<evidence type="ECO:0000250" key="1"/>
<evidence type="ECO:0000256" key="2">
    <source>
        <dbReference type="SAM" id="MobiDB-lite"/>
    </source>
</evidence>
<evidence type="ECO:0000305" key="3"/>
<dbReference type="EMBL" id="CP000501">
    <property type="protein sequence ID" value="ABN68097.2"/>
    <property type="molecule type" value="Genomic_DNA"/>
</dbReference>
<dbReference type="RefSeq" id="XP_001386126.2">
    <property type="nucleotide sequence ID" value="XM_001386089.1"/>
</dbReference>
<dbReference type="SMR" id="A3LZ57"/>
<dbReference type="FunCoup" id="A3LZ57">
    <property type="interactions" value="115"/>
</dbReference>
<dbReference type="STRING" id="322104.A3LZ57"/>
<dbReference type="GeneID" id="4840445"/>
<dbReference type="KEGG" id="pic:PICST_68327"/>
<dbReference type="eggNOG" id="KOG1913">
    <property type="taxonomic scope" value="Eukaryota"/>
</dbReference>
<dbReference type="HOGENOM" id="CLU_231080_0_0_1"/>
<dbReference type="InParanoid" id="A3LZ57"/>
<dbReference type="OMA" id="NQPPPIM"/>
<dbReference type="OrthoDB" id="8918678at2759"/>
<dbReference type="Proteomes" id="UP000002258">
    <property type="component" value="Chromosome 7"/>
</dbReference>
<dbReference type="GO" id="GO:0070971">
    <property type="term" value="C:endoplasmic reticulum exit site"/>
    <property type="evidence" value="ECO:0007669"/>
    <property type="project" value="UniProtKB-ARBA"/>
</dbReference>
<dbReference type="GO" id="GO:0005789">
    <property type="term" value="C:endoplasmic reticulum membrane"/>
    <property type="evidence" value="ECO:0007669"/>
    <property type="project" value="UniProtKB-SubCell"/>
</dbReference>
<dbReference type="GO" id="GO:0012507">
    <property type="term" value="C:ER to Golgi transport vesicle membrane"/>
    <property type="evidence" value="ECO:0007669"/>
    <property type="project" value="TreeGrafter"/>
</dbReference>
<dbReference type="GO" id="GO:0006914">
    <property type="term" value="P:autophagy"/>
    <property type="evidence" value="ECO:0007669"/>
    <property type="project" value="UniProtKB-KW"/>
</dbReference>
<dbReference type="GO" id="GO:0007030">
    <property type="term" value="P:Golgi organization"/>
    <property type="evidence" value="ECO:0007669"/>
    <property type="project" value="TreeGrafter"/>
</dbReference>
<dbReference type="GO" id="GO:0046907">
    <property type="term" value="P:intracellular transport"/>
    <property type="evidence" value="ECO:0007669"/>
    <property type="project" value="UniProtKB-ARBA"/>
</dbReference>
<dbReference type="GO" id="GO:0070973">
    <property type="term" value="P:protein localization to endoplasmic reticulum exit site"/>
    <property type="evidence" value="ECO:0007669"/>
    <property type="project" value="TreeGrafter"/>
</dbReference>
<dbReference type="GO" id="GO:0015031">
    <property type="term" value="P:protein transport"/>
    <property type="evidence" value="ECO:0007669"/>
    <property type="project" value="UniProtKB-KW"/>
</dbReference>
<dbReference type="GO" id="GO:0016192">
    <property type="term" value="P:vesicle-mediated transport"/>
    <property type="evidence" value="ECO:0007669"/>
    <property type="project" value="UniProtKB-KW"/>
</dbReference>
<dbReference type="CDD" id="cd09233">
    <property type="entry name" value="ACE1-Sec16-like"/>
    <property type="match status" value="1"/>
</dbReference>
<dbReference type="Gene3D" id="1.20.58.940">
    <property type="match status" value="1"/>
</dbReference>
<dbReference type="Gene3D" id="6.20.50.30">
    <property type="match status" value="1"/>
</dbReference>
<dbReference type="InterPro" id="IPR024340">
    <property type="entry name" value="Sec16_CCD"/>
</dbReference>
<dbReference type="InterPro" id="IPR024298">
    <property type="entry name" value="Sec16_Sec23-bd"/>
</dbReference>
<dbReference type="PANTHER" id="PTHR13402">
    <property type="entry name" value="RGPR-RELATED"/>
    <property type="match status" value="1"/>
</dbReference>
<dbReference type="PANTHER" id="PTHR13402:SF6">
    <property type="entry name" value="SECRETORY 16, ISOFORM I"/>
    <property type="match status" value="1"/>
</dbReference>
<dbReference type="Pfam" id="PF12932">
    <property type="entry name" value="Sec16"/>
    <property type="match status" value="1"/>
</dbReference>
<dbReference type="Pfam" id="PF12931">
    <property type="entry name" value="TPR_Sec16"/>
    <property type="match status" value="1"/>
</dbReference>
<protein>
    <recommendedName>
        <fullName>COPII coat assembly protein SEC16</fullName>
    </recommendedName>
    <alternativeName>
        <fullName>Protein transport protein SEC16</fullName>
    </alternativeName>
</protein>
<reference key="1">
    <citation type="journal article" date="2007" name="Nat. Biotechnol.">
        <title>Genome sequence of the lignocellulose-bioconverting and xylose-fermenting yeast Pichia stipitis.</title>
        <authorList>
            <person name="Jeffries T.W."/>
            <person name="Grigoriev I.V."/>
            <person name="Grimwood J."/>
            <person name="Laplaza J.M."/>
            <person name="Aerts A."/>
            <person name="Salamov A."/>
            <person name="Schmutz J."/>
            <person name="Lindquist E."/>
            <person name="Dehal P."/>
            <person name="Shapiro H."/>
            <person name="Jin Y.-S."/>
            <person name="Passoth V."/>
            <person name="Richardson P.M."/>
        </authorList>
    </citation>
    <scope>NUCLEOTIDE SEQUENCE [LARGE SCALE GENOMIC DNA]</scope>
    <source>
        <strain>ATCC 58785 / CBS 6054 / NBRC 10063 / NRRL Y-11545</strain>
    </source>
</reference>
<keyword id="KW-0072">Autophagy</keyword>
<keyword id="KW-0256">Endoplasmic reticulum</keyword>
<keyword id="KW-0931">ER-Golgi transport</keyword>
<keyword id="KW-0472">Membrane</keyword>
<keyword id="KW-0653">Protein transport</keyword>
<keyword id="KW-1185">Reference proteome</keyword>
<keyword id="KW-0813">Transport</keyword>
<accession>A3LZ57</accession>
<name>SEC16_PICST</name>
<sequence length="2212" mass="240375">MSIRKSTTSPVSGTDRADLNDSFAVSEAEPSQLHGHVEYGADVSVGVEDASGFTAEDAFQVGGEEDEEQVSTVTNGAVVPQSVVAAESADEDVLSRSTKKEEFLPESTSIAEPVKSDVITNVIDANADTGLDDDPWMKDGTPEFPPADENLPEVPPVAETKVETSKSIAKQQIYGEKVEDFTENSASPQEVDSKQTSSTIADFIPTPEHIHSNLHTSETENEPIKQSQLPWESHVEQIEALPWEEQPQKVEHVLPWEEKPDEVSQKDEALPWEERRVEHPEQAAESTLPWEEQPNVEEFQAHEPALPWEERPEVEESSLPWEEKVGESQGQEAALPWEEQQEVEVSSLLLEEKVRESSLPWEGEEGESQAQESKLPWEEQRIQSTPPSEEQVLEPVEGSSLPVEEKDSTEGSLPWNQHHEGEAQEILPWEQSTKPQDTQPQVSQEELHDYSVSNVISQSEIVEEQAQPVSQAYESQFLAGFFTERRPEQESETKQESLDELFEKDEDFLPELKQPVEQSTQTSKPKEFNLPELDLDDDLLLDDDLLDDDEPELVPEPVAPVEPIQEAIQNNVAKSPRQTYIPTQPHHNMYAPQISRTDTGEYVKKLEENKKRNDAYDFPDILMPPKVKPAPRHHQPTTKYSQPVASPNLSNIPSAPPATTIPPPVSIGIEASKKELPTTPQVAPGKPKSFFEELPVSMPKKAARAAPVKAVNQPHIQKSPQISNTPISASSKPAPVNPYMPSNTQKQNPHSPLQGSQYSFPRKTSSGLAPPPALNQYAPPSSNQYATVSAQVQPGLPQSSLPQSGMSQPGLQPFPQPQGHLVPPNLVAPQIQNSPLGQPQQTHNYAPPINTNVARAQGNLSATSPYVPNAGPYAPNNHNRSHSRASSLVGGGKGKEINPYAPALPPVSHSGTSPSIAQSSLTSRNRGISNPRNIYSKAQPAPKISNPNSLNQRQFPIFNWSNSQKVVTLIPNSSHNLYESHGESIRVRAAIDLLKDKEMYSTFPGPLSKSKTKRKDVEKWLESNIALLTTNSIENQDEYLLNQVLLEAVKFEGGFNSHEFIKAVCMVLNPTADYNTPGDISGMTSVSANAYKLDNAGIGIVFGLIQGGHIDKALEFTLSKGDWALALVVSNFAGHDRFAKVAADYARFSFPYQKSNNKIHHIIPILLKLAVGNVKSVIDDLNAVATEGEYASHHWREIVSSVIISGVSKSQDFLVEFGKFLGLHHNIAASEICYVIAGLPLSPQALQPSGIVVSVIGSLTGTSMYTEVYEYILKISTVFVQQGVGIIPHLLPLKLKHATVLADYGLFNESQKYIDSINNNMKTLGNRSPYLNAAFIHELQSLIVRLQELGSSESSWFSGKMSKVNLDNIWGQIDKFIGGEEPKSKSGENGVFSKFSPSVSRNTSTLDFTAMNVSSNKYPHSSPQMPSGQFGSSSIAPSTADGVSVPVTRAMPPLQSFNSTPAINTLSMNSKYSLPHLQQTKNASFSVHSQSTQVPPSHHSTPQQSHVHPNVPLHHAAESKYSPSNASPQVPDSTASPYVPPVKRTTPRVAAKAVNATGPYVYANPEGHVSNSSIGSHRQHGYHPPTSQTPTVNAKRHSVASVISNEATPNSEVIHSHHNHSPSIQSDISMDYPSEFKPPPAVKQIVDHKLVSALNDHAPDTIDESPEFKSEAIVEKVPPLSASQEVSGQPSAASTSVPSSEKAATVDDETTSSAASAPPPQSKASLKKPAKVNPYAPGANRSGTARKSKYGPPTGASSSKYSVPANLAQQDEPINDDTLKYGSMFDYSGYKTGEPTVADNDNVEPPTQSETTSKHAAEEDVTELIVEPKPSIPESPSAPKIVREPETSAPPHFKQPESHFAPFGYNTPLKARTKHYANIDDSFDNSEVSGDQDLTDIHTPRKRPLILNNGPPQLTGKESMFNPYQGDSGVNKFGLDFPIPGSPDYTTRANSVVDQPGYFSSRLSQSQQSALYQQYEVEDDTVRDYVPTVEEDDEEDEDEEDRDKKRLQEEEEKRAKAASEEAKKKASEAAAKRDPGRGWFNWSGKNDGKPKPIKAKLGNPSTFYYDEKHKRWLDKSRPIEEQLQAAAPPPPPAMKKKAPAASSNITASSGPPSAGPPPGINPSGVAPTAAPSGPPSAPSGVTSGPPSIGTGPSNGAGGPPFAKATSVQSSAPSLANAGLDDLLSMGGSSVAGGTRKAKRNTRRGHINVFDKK</sequence>
<proteinExistence type="inferred from homology"/>
<comment type="function">
    <text evidence="1">Involved in the initiation of assembly of the COPII coat required for the formation of transport vesicles from the endoplasmic reticulum (ER) and the selection of cargo molecules. Also involved in autophagy (By similarity).</text>
</comment>
<comment type="subcellular location">
    <subcellularLocation>
        <location evidence="1">Endoplasmic reticulum membrane</location>
        <topology evidence="1">Peripheral membrane protein</topology>
        <orientation evidence="1">Cytoplasmic side</orientation>
    </subcellularLocation>
</comment>
<comment type="similarity">
    <text evidence="3">Belongs to the SEC16 family.</text>
</comment>
<organism>
    <name type="scientific">Scheffersomyces stipitis (strain ATCC 58785 / CBS 6054 / NBRC 10063 / NRRL Y-11545)</name>
    <name type="common">Yeast</name>
    <name type="synonym">Pichia stipitis</name>
    <dbReference type="NCBI Taxonomy" id="322104"/>
    <lineage>
        <taxon>Eukaryota</taxon>
        <taxon>Fungi</taxon>
        <taxon>Dikarya</taxon>
        <taxon>Ascomycota</taxon>
        <taxon>Saccharomycotina</taxon>
        <taxon>Pichiomycetes</taxon>
        <taxon>Debaryomycetaceae</taxon>
        <taxon>Scheffersomyces</taxon>
    </lineage>
</organism>
<gene>
    <name type="primary">SEC16</name>
    <name type="ORF">PICST_68327</name>
</gene>
<feature type="chain" id="PRO_0000295543" description="COPII coat assembly protein SEC16">
    <location>
        <begin position="1"/>
        <end position="2212"/>
    </location>
</feature>
<feature type="region of interest" description="Disordered" evidence="2">
    <location>
        <begin position="1"/>
        <end position="31"/>
    </location>
</feature>
<feature type="region of interest" description="Disordered" evidence="2">
    <location>
        <begin position="173"/>
        <end position="343"/>
    </location>
</feature>
<feature type="region of interest" description="Disordered" evidence="2">
    <location>
        <begin position="355"/>
        <end position="451"/>
    </location>
</feature>
<feature type="region of interest" description="Disordered" evidence="2">
    <location>
        <begin position="480"/>
        <end position="563"/>
    </location>
</feature>
<feature type="region of interest" description="Disordered" evidence="2">
    <location>
        <begin position="626"/>
        <end position="666"/>
    </location>
</feature>
<feature type="region of interest" description="Disordered" evidence="2">
    <location>
        <begin position="705"/>
        <end position="849"/>
    </location>
</feature>
<feature type="region of interest" description="Disordered" evidence="2">
    <location>
        <begin position="861"/>
        <end position="948"/>
    </location>
</feature>
<feature type="region of interest" description="Disordered" evidence="2">
    <location>
        <begin position="1380"/>
        <end position="1400"/>
    </location>
</feature>
<feature type="region of interest" description="Disordered" evidence="2">
    <location>
        <begin position="1416"/>
        <end position="1446"/>
    </location>
</feature>
<feature type="region of interest" description="Disordered" evidence="2">
    <location>
        <begin position="1484"/>
        <end position="1542"/>
    </location>
</feature>
<feature type="region of interest" description="Disordered" evidence="2">
    <location>
        <begin position="1572"/>
        <end position="1593"/>
    </location>
</feature>
<feature type="region of interest" description="Disordered" evidence="2">
    <location>
        <begin position="1680"/>
        <end position="1866"/>
    </location>
</feature>
<feature type="region of interest" description="Disordered" evidence="2">
    <location>
        <begin position="1883"/>
        <end position="1927"/>
    </location>
</feature>
<feature type="region of interest" description="Disordered" evidence="2">
    <location>
        <begin position="1960"/>
        <end position="2212"/>
    </location>
</feature>
<feature type="compositionally biased region" description="Polar residues" evidence="2">
    <location>
        <begin position="1"/>
        <end position="12"/>
    </location>
</feature>
<feature type="compositionally biased region" description="Polar residues" evidence="2">
    <location>
        <begin position="183"/>
        <end position="200"/>
    </location>
</feature>
<feature type="compositionally biased region" description="Basic and acidic residues" evidence="2">
    <location>
        <begin position="246"/>
        <end position="282"/>
    </location>
</feature>
<feature type="compositionally biased region" description="Polar residues" evidence="2">
    <location>
        <begin position="430"/>
        <end position="444"/>
    </location>
</feature>
<feature type="compositionally biased region" description="Basic and acidic residues" evidence="2">
    <location>
        <begin position="483"/>
        <end position="497"/>
    </location>
</feature>
<feature type="compositionally biased region" description="Acidic residues" evidence="2">
    <location>
        <begin position="498"/>
        <end position="509"/>
    </location>
</feature>
<feature type="compositionally biased region" description="Acidic residues" evidence="2">
    <location>
        <begin position="533"/>
        <end position="553"/>
    </location>
</feature>
<feature type="compositionally biased region" description="Polar residues" evidence="2">
    <location>
        <begin position="637"/>
        <end position="651"/>
    </location>
</feature>
<feature type="compositionally biased region" description="Pro residues" evidence="2">
    <location>
        <begin position="654"/>
        <end position="665"/>
    </location>
</feature>
<feature type="compositionally biased region" description="Polar residues" evidence="2">
    <location>
        <begin position="714"/>
        <end position="731"/>
    </location>
</feature>
<feature type="compositionally biased region" description="Polar residues" evidence="2">
    <location>
        <begin position="740"/>
        <end position="767"/>
    </location>
</feature>
<feature type="compositionally biased region" description="Polar residues" evidence="2">
    <location>
        <begin position="778"/>
        <end position="807"/>
    </location>
</feature>
<feature type="compositionally biased region" description="Low complexity" evidence="2">
    <location>
        <begin position="808"/>
        <end position="819"/>
    </location>
</feature>
<feature type="compositionally biased region" description="Polar residues" evidence="2">
    <location>
        <begin position="830"/>
        <end position="849"/>
    </location>
</feature>
<feature type="compositionally biased region" description="Polar residues" evidence="2">
    <location>
        <begin position="909"/>
        <end position="933"/>
    </location>
</feature>
<feature type="compositionally biased region" description="Polar residues" evidence="2">
    <location>
        <begin position="1416"/>
        <end position="1437"/>
    </location>
</feature>
<feature type="compositionally biased region" description="Polar residues" evidence="2">
    <location>
        <begin position="1484"/>
        <end position="1507"/>
    </location>
</feature>
<feature type="compositionally biased region" description="Polar residues" evidence="2">
    <location>
        <begin position="1521"/>
        <end position="1536"/>
    </location>
</feature>
<feature type="compositionally biased region" description="Polar residues" evidence="2">
    <location>
        <begin position="1681"/>
        <end position="1699"/>
    </location>
</feature>
<feature type="compositionally biased region" description="Low complexity" evidence="2">
    <location>
        <begin position="1960"/>
        <end position="1975"/>
    </location>
</feature>
<feature type="compositionally biased region" description="Acidic residues" evidence="2">
    <location>
        <begin position="1989"/>
        <end position="2001"/>
    </location>
</feature>
<feature type="compositionally biased region" description="Basic and acidic residues" evidence="2">
    <location>
        <begin position="2002"/>
        <end position="2036"/>
    </location>
</feature>
<feature type="compositionally biased region" description="Basic and acidic residues" evidence="2">
    <location>
        <begin position="2065"/>
        <end position="2080"/>
    </location>
</feature>
<feature type="compositionally biased region" description="Low complexity" evidence="2">
    <location>
        <begin position="2121"/>
        <end position="2131"/>
    </location>
</feature>
<feature type="compositionally biased region" description="Low complexity" evidence="2">
    <location>
        <begin position="2138"/>
        <end position="2147"/>
    </location>
</feature>
<feature type="compositionally biased region" description="Basic residues" evidence="2">
    <location>
        <begin position="2195"/>
        <end position="2205"/>
    </location>
</feature>